<protein>
    <recommendedName>
        <fullName evidence="1">Multidrug resistance protein MdtL</fullName>
    </recommendedName>
</protein>
<dbReference type="EMBL" id="CU928163">
    <property type="protein sequence ID" value="CAR15381.1"/>
    <property type="molecule type" value="Genomic_DNA"/>
</dbReference>
<dbReference type="RefSeq" id="WP_000086009.1">
    <property type="nucleotide sequence ID" value="NC_011751.1"/>
</dbReference>
<dbReference type="RefSeq" id="YP_002414876.1">
    <property type="nucleotide sequence ID" value="NC_011751.1"/>
</dbReference>
<dbReference type="SMR" id="B7NF27"/>
<dbReference type="STRING" id="585056.ECUMN_4241"/>
<dbReference type="KEGG" id="eum:ECUMN_4241"/>
<dbReference type="PATRIC" id="fig|585056.7.peg.4412"/>
<dbReference type="HOGENOM" id="CLU_001265_47_1_6"/>
<dbReference type="Proteomes" id="UP000007097">
    <property type="component" value="Chromosome"/>
</dbReference>
<dbReference type="GO" id="GO:0005886">
    <property type="term" value="C:plasma membrane"/>
    <property type="evidence" value="ECO:0007669"/>
    <property type="project" value="UniProtKB-SubCell"/>
</dbReference>
<dbReference type="GO" id="GO:0022857">
    <property type="term" value="F:transmembrane transporter activity"/>
    <property type="evidence" value="ECO:0007669"/>
    <property type="project" value="UniProtKB-UniRule"/>
</dbReference>
<dbReference type="GO" id="GO:0046677">
    <property type="term" value="P:response to antibiotic"/>
    <property type="evidence" value="ECO:0007669"/>
    <property type="project" value="UniProtKB-KW"/>
</dbReference>
<dbReference type="CDD" id="cd17320">
    <property type="entry name" value="MFS_MdfA_MDR_like"/>
    <property type="match status" value="1"/>
</dbReference>
<dbReference type="FunFam" id="1.20.1720.10:FF:000003">
    <property type="entry name" value="Multidrug resistance protein MdtL"/>
    <property type="match status" value="1"/>
</dbReference>
<dbReference type="Gene3D" id="1.20.1720.10">
    <property type="entry name" value="Multidrug resistance protein D"/>
    <property type="match status" value="1"/>
</dbReference>
<dbReference type="HAMAP" id="MF_01530">
    <property type="entry name" value="MFS_MdtL"/>
    <property type="match status" value="1"/>
</dbReference>
<dbReference type="InterPro" id="IPR011701">
    <property type="entry name" value="MFS"/>
</dbReference>
<dbReference type="InterPro" id="IPR020846">
    <property type="entry name" value="MFS_dom"/>
</dbReference>
<dbReference type="InterPro" id="IPR050189">
    <property type="entry name" value="MFS_Efflux_Transporters"/>
</dbReference>
<dbReference type="InterPro" id="IPR036259">
    <property type="entry name" value="MFS_trans_sf"/>
</dbReference>
<dbReference type="InterPro" id="IPR023697">
    <property type="entry name" value="Multidrug-R_MdtL"/>
</dbReference>
<dbReference type="NCBIfam" id="NF007782">
    <property type="entry name" value="PRK10473.1"/>
    <property type="match status" value="1"/>
</dbReference>
<dbReference type="PANTHER" id="PTHR43124:SF3">
    <property type="entry name" value="CHLORAMPHENICOL EFFLUX PUMP RV0191"/>
    <property type="match status" value="1"/>
</dbReference>
<dbReference type="PANTHER" id="PTHR43124">
    <property type="entry name" value="PURINE EFFLUX PUMP PBUE"/>
    <property type="match status" value="1"/>
</dbReference>
<dbReference type="Pfam" id="PF07690">
    <property type="entry name" value="MFS_1"/>
    <property type="match status" value="1"/>
</dbReference>
<dbReference type="SUPFAM" id="SSF103473">
    <property type="entry name" value="MFS general substrate transporter"/>
    <property type="match status" value="1"/>
</dbReference>
<dbReference type="PROSITE" id="PS50850">
    <property type="entry name" value="MFS"/>
    <property type="match status" value="1"/>
</dbReference>
<proteinExistence type="inferred from homology"/>
<gene>
    <name evidence="1" type="primary">mdtL</name>
    <name type="ordered locus">ECUMN_4241</name>
</gene>
<accession>B7NF27</accession>
<evidence type="ECO:0000255" key="1">
    <source>
        <dbReference type="HAMAP-Rule" id="MF_01530"/>
    </source>
</evidence>
<sequence>MSRFLICSFALVLLYPAGIDMYLVGLPRIAADLNASEAQLHIAFSVYLAGMAAAMLFAGKVADRSGRKPVAIPGAALFIIASVFCSLAETSTLFLAGRFLQGLGAGCCYVVAFAILRDTLDDRRRAKVLSLLNGITCIIPVLAPVLGHLIMLKFPWQSLFWTMATMGIAVLMLSLFILKETRPAAPTNSDKPRENSESLLNRFFLSRVVITTLSVSVILTFVNTSPVLLMEIMGFERGEYATIMALTAGVSMTVSFSTPFALGIFKPRTLMITSQVLFLAAGITLAVSPSHAVSLFGITLICAGFSVGFGVAMSQALGPFSLRAGVASSTLGIAQVCGSSLWIWLAAVVGIGAWNMLIGILIACSIVSLLLIMFVAPGRPVAAHEEIHHHA</sequence>
<reference key="1">
    <citation type="journal article" date="2009" name="PLoS Genet.">
        <title>Organised genome dynamics in the Escherichia coli species results in highly diverse adaptive paths.</title>
        <authorList>
            <person name="Touchon M."/>
            <person name="Hoede C."/>
            <person name="Tenaillon O."/>
            <person name="Barbe V."/>
            <person name="Baeriswyl S."/>
            <person name="Bidet P."/>
            <person name="Bingen E."/>
            <person name="Bonacorsi S."/>
            <person name="Bouchier C."/>
            <person name="Bouvet O."/>
            <person name="Calteau A."/>
            <person name="Chiapello H."/>
            <person name="Clermont O."/>
            <person name="Cruveiller S."/>
            <person name="Danchin A."/>
            <person name="Diard M."/>
            <person name="Dossat C."/>
            <person name="Karoui M.E."/>
            <person name="Frapy E."/>
            <person name="Garry L."/>
            <person name="Ghigo J.M."/>
            <person name="Gilles A.M."/>
            <person name="Johnson J."/>
            <person name="Le Bouguenec C."/>
            <person name="Lescat M."/>
            <person name="Mangenot S."/>
            <person name="Martinez-Jehanne V."/>
            <person name="Matic I."/>
            <person name="Nassif X."/>
            <person name="Oztas S."/>
            <person name="Petit M.A."/>
            <person name="Pichon C."/>
            <person name="Rouy Z."/>
            <person name="Ruf C.S."/>
            <person name="Schneider D."/>
            <person name="Tourret J."/>
            <person name="Vacherie B."/>
            <person name="Vallenet D."/>
            <person name="Medigue C."/>
            <person name="Rocha E.P.C."/>
            <person name="Denamur E."/>
        </authorList>
    </citation>
    <scope>NUCLEOTIDE SEQUENCE [LARGE SCALE GENOMIC DNA]</scope>
    <source>
        <strain>UMN026 / ExPEC</strain>
    </source>
</reference>
<organism>
    <name type="scientific">Escherichia coli O17:K52:H18 (strain UMN026 / ExPEC)</name>
    <dbReference type="NCBI Taxonomy" id="585056"/>
    <lineage>
        <taxon>Bacteria</taxon>
        <taxon>Pseudomonadati</taxon>
        <taxon>Pseudomonadota</taxon>
        <taxon>Gammaproteobacteria</taxon>
        <taxon>Enterobacterales</taxon>
        <taxon>Enterobacteriaceae</taxon>
        <taxon>Escherichia</taxon>
    </lineage>
</organism>
<comment type="function">
    <text evidence="1">Confers resistance to chloramphenicol.</text>
</comment>
<comment type="subcellular location">
    <subcellularLocation>
        <location evidence="1">Cell inner membrane</location>
        <topology evidence="1">Multi-pass membrane protein</topology>
    </subcellularLocation>
</comment>
<comment type="similarity">
    <text evidence="1">Belongs to the major facilitator superfamily. DHA1 family. MdtL (TC 2.A.1.2.22) subfamily.</text>
</comment>
<feature type="chain" id="PRO_1000200820" description="Multidrug resistance protein MdtL">
    <location>
        <begin position="1"/>
        <end position="391"/>
    </location>
</feature>
<feature type="transmembrane region" description="Helical" evidence="1">
    <location>
        <begin position="4"/>
        <end position="24"/>
    </location>
</feature>
<feature type="transmembrane region" description="Helical" evidence="1">
    <location>
        <begin position="42"/>
        <end position="62"/>
    </location>
</feature>
<feature type="transmembrane region" description="Helical" evidence="1">
    <location>
        <begin position="69"/>
        <end position="89"/>
    </location>
</feature>
<feature type="transmembrane region" description="Helical" evidence="1">
    <location>
        <begin position="93"/>
        <end position="113"/>
    </location>
</feature>
<feature type="transmembrane region" description="Helical" evidence="1">
    <location>
        <begin position="131"/>
        <end position="151"/>
    </location>
</feature>
<feature type="transmembrane region" description="Helical" evidence="1">
    <location>
        <begin position="158"/>
        <end position="178"/>
    </location>
</feature>
<feature type="transmembrane region" description="Helical" evidence="1">
    <location>
        <begin position="203"/>
        <end position="222"/>
    </location>
</feature>
<feature type="transmembrane region" description="Helical" evidence="1">
    <location>
        <begin position="245"/>
        <end position="265"/>
    </location>
</feature>
<feature type="transmembrane region" description="Helical" evidence="1">
    <location>
        <begin position="269"/>
        <end position="289"/>
    </location>
</feature>
<feature type="transmembrane region" description="Helical" evidence="1">
    <location>
        <begin position="293"/>
        <end position="313"/>
    </location>
</feature>
<feature type="transmembrane region" description="Helical" evidence="1">
    <location>
        <begin position="331"/>
        <end position="351"/>
    </location>
</feature>
<feature type="transmembrane region" description="Helical" evidence="1">
    <location>
        <begin position="356"/>
        <end position="376"/>
    </location>
</feature>
<keyword id="KW-0046">Antibiotic resistance</keyword>
<keyword id="KW-0997">Cell inner membrane</keyword>
<keyword id="KW-1003">Cell membrane</keyword>
<keyword id="KW-0472">Membrane</keyword>
<keyword id="KW-0812">Transmembrane</keyword>
<keyword id="KW-1133">Transmembrane helix</keyword>
<keyword id="KW-0813">Transport</keyword>
<name>MDTL_ECOLU</name>